<accession>Q7A722</accession>
<evidence type="ECO:0000250" key="1"/>
<evidence type="ECO:0000255" key="2"/>
<evidence type="ECO:0000305" key="3"/>
<name>MNHG2_STAAN</name>
<organism>
    <name type="scientific">Staphylococcus aureus (strain N315)</name>
    <dbReference type="NCBI Taxonomy" id="158879"/>
    <lineage>
        <taxon>Bacteria</taxon>
        <taxon>Bacillati</taxon>
        <taxon>Bacillota</taxon>
        <taxon>Bacilli</taxon>
        <taxon>Bacillales</taxon>
        <taxon>Staphylococcaceae</taxon>
        <taxon>Staphylococcus</taxon>
    </lineage>
</organism>
<keyword id="KW-0050">Antiport</keyword>
<keyword id="KW-1003">Cell membrane</keyword>
<keyword id="KW-0406">Ion transport</keyword>
<keyword id="KW-0472">Membrane</keyword>
<keyword id="KW-0812">Transmembrane</keyword>
<keyword id="KW-1133">Transmembrane helix</keyword>
<keyword id="KW-0813">Transport</keyword>
<protein>
    <recommendedName>
        <fullName>Putative antiporter subunit mnhG2</fullName>
    </recommendedName>
    <alternativeName>
        <fullName>Mrp complex subunit G2</fullName>
    </alternativeName>
    <alternativeName>
        <fullName>Putative NADH-ubiquinone oxidoreductase subunit mnhF2</fullName>
    </alternativeName>
</protein>
<feature type="chain" id="PRO_0000372181" description="Putative antiporter subunit mnhG2">
    <location>
        <begin position="1"/>
        <end position="145"/>
    </location>
</feature>
<feature type="transmembrane region" description="Helical" evidence="2">
    <location>
        <begin position="11"/>
        <end position="31"/>
    </location>
</feature>
<feature type="transmembrane region" description="Helical" evidence="2">
    <location>
        <begin position="51"/>
        <end position="71"/>
    </location>
</feature>
<feature type="transmembrane region" description="Helical" evidence="2">
    <location>
        <begin position="72"/>
        <end position="92"/>
    </location>
</feature>
<gene>
    <name type="primary">mnhG2</name>
    <name type="synonym">mrpG2</name>
    <name type="ordered locus">SA0584</name>
</gene>
<dbReference type="EMBL" id="BA000018">
    <property type="protein sequence ID" value="BAB41816.1"/>
    <property type="molecule type" value="Genomic_DNA"/>
</dbReference>
<dbReference type="PIR" id="E89832">
    <property type="entry name" value="E89832"/>
</dbReference>
<dbReference type="RefSeq" id="WP_000406612.1">
    <property type="nucleotide sequence ID" value="NC_002745.2"/>
</dbReference>
<dbReference type="SMR" id="Q7A722"/>
<dbReference type="EnsemblBacteria" id="BAB41816">
    <property type="protein sequence ID" value="BAB41816"/>
    <property type="gene ID" value="BAB41816"/>
</dbReference>
<dbReference type="KEGG" id="sau:SA0584"/>
<dbReference type="HOGENOM" id="CLU_121334_0_3_9"/>
<dbReference type="GO" id="GO:0005886">
    <property type="term" value="C:plasma membrane"/>
    <property type="evidence" value="ECO:0007669"/>
    <property type="project" value="UniProtKB-SubCell"/>
</dbReference>
<dbReference type="GO" id="GO:0015385">
    <property type="term" value="F:sodium:proton antiporter activity"/>
    <property type="evidence" value="ECO:0007669"/>
    <property type="project" value="TreeGrafter"/>
</dbReference>
<dbReference type="InterPro" id="IPR005133">
    <property type="entry name" value="PhaG_MnhG_YufB"/>
</dbReference>
<dbReference type="NCBIfam" id="TIGR01300">
    <property type="entry name" value="CPA3_mnhG_phaG"/>
    <property type="match status" value="1"/>
</dbReference>
<dbReference type="NCBIfam" id="NF009236">
    <property type="entry name" value="PRK12586.1"/>
    <property type="match status" value="1"/>
</dbReference>
<dbReference type="NCBIfam" id="NF009314">
    <property type="entry name" value="PRK12674.1-2"/>
    <property type="match status" value="1"/>
</dbReference>
<dbReference type="PANTHER" id="PTHR34703">
    <property type="entry name" value="ANTIPORTER SUBUNIT MNHG2-RELATED"/>
    <property type="match status" value="1"/>
</dbReference>
<dbReference type="PANTHER" id="PTHR34703:SF1">
    <property type="entry name" value="ANTIPORTER SUBUNIT MNHG2-RELATED"/>
    <property type="match status" value="1"/>
</dbReference>
<dbReference type="Pfam" id="PF03334">
    <property type="entry name" value="PhaG_MnhG_YufB"/>
    <property type="match status" value="1"/>
</dbReference>
<proteinExistence type="inferred from homology"/>
<reference key="1">
    <citation type="journal article" date="2001" name="Lancet">
        <title>Whole genome sequencing of meticillin-resistant Staphylococcus aureus.</title>
        <authorList>
            <person name="Kuroda M."/>
            <person name="Ohta T."/>
            <person name="Uchiyama I."/>
            <person name="Baba T."/>
            <person name="Yuzawa H."/>
            <person name="Kobayashi I."/>
            <person name="Cui L."/>
            <person name="Oguchi A."/>
            <person name="Aoki K."/>
            <person name="Nagai Y."/>
            <person name="Lian J.-Q."/>
            <person name="Ito T."/>
            <person name="Kanamori M."/>
            <person name="Matsumaru H."/>
            <person name="Maruyama A."/>
            <person name="Murakami H."/>
            <person name="Hosoyama A."/>
            <person name="Mizutani-Ui Y."/>
            <person name="Takahashi N.K."/>
            <person name="Sawano T."/>
            <person name="Inoue R."/>
            <person name="Kaito C."/>
            <person name="Sekimizu K."/>
            <person name="Hirakawa H."/>
            <person name="Kuhara S."/>
            <person name="Goto S."/>
            <person name="Yabuzaki J."/>
            <person name="Kanehisa M."/>
            <person name="Yamashita A."/>
            <person name="Oshima K."/>
            <person name="Furuya K."/>
            <person name="Yoshino C."/>
            <person name="Shiba T."/>
            <person name="Hattori M."/>
            <person name="Ogasawara N."/>
            <person name="Hayashi H."/>
            <person name="Hiramatsu K."/>
        </authorList>
    </citation>
    <scope>NUCLEOTIDE SEQUENCE [LARGE SCALE GENOMIC DNA]</scope>
    <source>
        <strain>N315</strain>
    </source>
</reference>
<comment type="subunit">
    <text evidence="1">May form a heterooligomeric complex that consists of seven subunits: mnhA2, mnhB2, mnhC2, mnhD2, mnhE2, mnhF2 and mnhG2.</text>
</comment>
<comment type="subcellular location">
    <subcellularLocation>
        <location evidence="3">Cell membrane</location>
        <topology evidence="3">Multi-pass membrane protein</topology>
    </subcellularLocation>
</comment>
<comment type="similarity">
    <text evidence="3">Belongs to the CPA3 antiporters (TC 2.A.63) subunit G family.</text>
</comment>
<sequence length="145" mass="16302">MEITKEIFSLIAAVMLLLGSFIALISAIGIVKFQDVFLRSHAATKSSTLSVLLTLIGVLIYFIVNTGFFSVRLLLSLVFINLTSPVGMHLVARAAYRNGAYMYRKNDAHTHASILLSSNEQNSTEALQLRAKKREEHRKKWYQND</sequence>